<keyword id="KW-0067">ATP-binding</keyword>
<keyword id="KW-0418">Kinase</keyword>
<keyword id="KW-0545">Nucleotide biosynthesis</keyword>
<keyword id="KW-0547">Nucleotide-binding</keyword>
<keyword id="KW-1185">Reference proteome</keyword>
<keyword id="KW-0808">Transferase</keyword>
<feature type="chain" id="PRO_1000023242" description="Thymidylate kinase">
    <location>
        <begin position="1"/>
        <end position="214"/>
    </location>
</feature>
<feature type="binding site" evidence="1">
    <location>
        <begin position="7"/>
        <end position="14"/>
    </location>
    <ligand>
        <name>ATP</name>
        <dbReference type="ChEBI" id="CHEBI:30616"/>
    </ligand>
</feature>
<name>KTHY_CHLL3</name>
<gene>
    <name evidence="1" type="primary">tmk</name>
    <name type="ordered locus">Plut_1310</name>
</gene>
<sequence length="214" mass="24123">MLITFEGIDGAGKSTQIQKLAAYLKQEGREVLTLREPGGTEVAEKIRHILLESRHDITPVGELLLFSASRAELVSEVVRPALAEGKTVILDRFFDSTTAYQGYGRGLDLNMLRTLIAISTGALTPDITFYLDILPEEALIRKFSEKSLPLAFENEELDRMERSGLEFYRNVRQGYLDIIEAEPGRFKSINARHGVQEIHAIIVKTLNERFKEQS</sequence>
<organism>
    <name type="scientific">Chlorobium luteolum (strain DSM 273 / BCRC 81028 / 2530)</name>
    <name type="common">Pelodictyon luteolum</name>
    <dbReference type="NCBI Taxonomy" id="319225"/>
    <lineage>
        <taxon>Bacteria</taxon>
        <taxon>Pseudomonadati</taxon>
        <taxon>Chlorobiota</taxon>
        <taxon>Chlorobiia</taxon>
        <taxon>Chlorobiales</taxon>
        <taxon>Chlorobiaceae</taxon>
        <taxon>Chlorobium/Pelodictyon group</taxon>
        <taxon>Pelodictyon</taxon>
    </lineage>
</organism>
<reference key="1">
    <citation type="submission" date="2005-08" db="EMBL/GenBank/DDBJ databases">
        <title>Complete sequence of Pelodictyon luteolum DSM 273.</title>
        <authorList>
            <consortium name="US DOE Joint Genome Institute"/>
            <person name="Copeland A."/>
            <person name="Lucas S."/>
            <person name="Lapidus A."/>
            <person name="Barry K."/>
            <person name="Detter J.C."/>
            <person name="Glavina T."/>
            <person name="Hammon N."/>
            <person name="Israni S."/>
            <person name="Pitluck S."/>
            <person name="Bryant D."/>
            <person name="Schmutz J."/>
            <person name="Larimer F."/>
            <person name="Land M."/>
            <person name="Kyrpides N."/>
            <person name="Ivanova N."/>
            <person name="Richardson P."/>
        </authorList>
    </citation>
    <scope>NUCLEOTIDE SEQUENCE [LARGE SCALE GENOMIC DNA]</scope>
    <source>
        <strain>DSM 273 / BCRC 81028 / 2530</strain>
    </source>
</reference>
<proteinExistence type="inferred from homology"/>
<evidence type="ECO:0000255" key="1">
    <source>
        <dbReference type="HAMAP-Rule" id="MF_00165"/>
    </source>
</evidence>
<protein>
    <recommendedName>
        <fullName evidence="1">Thymidylate kinase</fullName>
        <ecNumber evidence="1">2.7.4.9</ecNumber>
    </recommendedName>
    <alternativeName>
        <fullName evidence="1">dTMP kinase</fullName>
    </alternativeName>
</protein>
<comment type="function">
    <text evidence="1">Phosphorylation of dTMP to form dTDP in both de novo and salvage pathways of dTTP synthesis.</text>
</comment>
<comment type="catalytic activity">
    <reaction evidence="1">
        <text>dTMP + ATP = dTDP + ADP</text>
        <dbReference type="Rhea" id="RHEA:13517"/>
        <dbReference type="ChEBI" id="CHEBI:30616"/>
        <dbReference type="ChEBI" id="CHEBI:58369"/>
        <dbReference type="ChEBI" id="CHEBI:63528"/>
        <dbReference type="ChEBI" id="CHEBI:456216"/>
        <dbReference type="EC" id="2.7.4.9"/>
    </reaction>
</comment>
<comment type="similarity">
    <text evidence="1">Belongs to the thymidylate kinase family.</text>
</comment>
<dbReference type="EC" id="2.7.4.9" evidence="1"/>
<dbReference type="EMBL" id="CP000096">
    <property type="protein sequence ID" value="ABB24170.1"/>
    <property type="molecule type" value="Genomic_DNA"/>
</dbReference>
<dbReference type="RefSeq" id="WP_011358042.1">
    <property type="nucleotide sequence ID" value="NC_007512.1"/>
</dbReference>
<dbReference type="SMR" id="Q3B3B1"/>
<dbReference type="STRING" id="319225.Plut_1310"/>
<dbReference type="KEGG" id="plt:Plut_1310"/>
<dbReference type="eggNOG" id="COG0125">
    <property type="taxonomic scope" value="Bacteria"/>
</dbReference>
<dbReference type="HOGENOM" id="CLU_049131_0_2_10"/>
<dbReference type="OrthoDB" id="9774907at2"/>
<dbReference type="Proteomes" id="UP000002709">
    <property type="component" value="Chromosome"/>
</dbReference>
<dbReference type="GO" id="GO:0005829">
    <property type="term" value="C:cytosol"/>
    <property type="evidence" value="ECO:0007669"/>
    <property type="project" value="TreeGrafter"/>
</dbReference>
<dbReference type="GO" id="GO:0005524">
    <property type="term" value="F:ATP binding"/>
    <property type="evidence" value="ECO:0007669"/>
    <property type="project" value="UniProtKB-UniRule"/>
</dbReference>
<dbReference type="GO" id="GO:0004798">
    <property type="term" value="F:dTMP kinase activity"/>
    <property type="evidence" value="ECO:0007669"/>
    <property type="project" value="UniProtKB-UniRule"/>
</dbReference>
<dbReference type="GO" id="GO:0006233">
    <property type="term" value="P:dTDP biosynthetic process"/>
    <property type="evidence" value="ECO:0007669"/>
    <property type="project" value="InterPro"/>
</dbReference>
<dbReference type="GO" id="GO:0006235">
    <property type="term" value="P:dTTP biosynthetic process"/>
    <property type="evidence" value="ECO:0007669"/>
    <property type="project" value="UniProtKB-UniRule"/>
</dbReference>
<dbReference type="GO" id="GO:0006227">
    <property type="term" value="P:dUDP biosynthetic process"/>
    <property type="evidence" value="ECO:0007669"/>
    <property type="project" value="TreeGrafter"/>
</dbReference>
<dbReference type="CDD" id="cd01672">
    <property type="entry name" value="TMPK"/>
    <property type="match status" value="1"/>
</dbReference>
<dbReference type="FunFam" id="3.40.50.300:FF:000225">
    <property type="entry name" value="Thymidylate kinase"/>
    <property type="match status" value="1"/>
</dbReference>
<dbReference type="Gene3D" id="3.40.50.300">
    <property type="entry name" value="P-loop containing nucleotide triphosphate hydrolases"/>
    <property type="match status" value="1"/>
</dbReference>
<dbReference type="HAMAP" id="MF_00165">
    <property type="entry name" value="Thymidylate_kinase"/>
    <property type="match status" value="1"/>
</dbReference>
<dbReference type="InterPro" id="IPR027417">
    <property type="entry name" value="P-loop_NTPase"/>
</dbReference>
<dbReference type="InterPro" id="IPR039430">
    <property type="entry name" value="Thymidylate_kin-like_dom"/>
</dbReference>
<dbReference type="InterPro" id="IPR018095">
    <property type="entry name" value="Thymidylate_kin_CS"/>
</dbReference>
<dbReference type="InterPro" id="IPR018094">
    <property type="entry name" value="Thymidylate_kinase"/>
</dbReference>
<dbReference type="NCBIfam" id="TIGR00041">
    <property type="entry name" value="DTMP_kinase"/>
    <property type="match status" value="1"/>
</dbReference>
<dbReference type="PANTHER" id="PTHR10344">
    <property type="entry name" value="THYMIDYLATE KINASE"/>
    <property type="match status" value="1"/>
</dbReference>
<dbReference type="PANTHER" id="PTHR10344:SF4">
    <property type="entry name" value="UMP-CMP KINASE 2, MITOCHONDRIAL"/>
    <property type="match status" value="1"/>
</dbReference>
<dbReference type="Pfam" id="PF02223">
    <property type="entry name" value="Thymidylate_kin"/>
    <property type="match status" value="1"/>
</dbReference>
<dbReference type="SUPFAM" id="SSF52540">
    <property type="entry name" value="P-loop containing nucleoside triphosphate hydrolases"/>
    <property type="match status" value="1"/>
</dbReference>
<dbReference type="PROSITE" id="PS01331">
    <property type="entry name" value="THYMIDYLATE_KINASE"/>
    <property type="match status" value="1"/>
</dbReference>
<accession>Q3B3B1</accession>